<organism>
    <name type="scientific">Xanthomonas campestris pv. campestris (strain B100)</name>
    <dbReference type="NCBI Taxonomy" id="509169"/>
    <lineage>
        <taxon>Bacteria</taxon>
        <taxon>Pseudomonadati</taxon>
        <taxon>Pseudomonadota</taxon>
        <taxon>Gammaproteobacteria</taxon>
        <taxon>Lysobacterales</taxon>
        <taxon>Lysobacteraceae</taxon>
        <taxon>Xanthomonas</taxon>
    </lineage>
</organism>
<reference key="1">
    <citation type="journal article" date="2008" name="J. Biotechnol.">
        <title>The genome of Xanthomonas campestris pv. campestris B100 and its use for the reconstruction of metabolic pathways involved in xanthan biosynthesis.</title>
        <authorList>
            <person name="Vorhoelter F.-J."/>
            <person name="Schneiker S."/>
            <person name="Goesmann A."/>
            <person name="Krause L."/>
            <person name="Bekel T."/>
            <person name="Kaiser O."/>
            <person name="Linke B."/>
            <person name="Patschkowski T."/>
            <person name="Rueckert C."/>
            <person name="Schmid J."/>
            <person name="Sidhu V.K."/>
            <person name="Sieber V."/>
            <person name="Tauch A."/>
            <person name="Watt S.A."/>
            <person name="Weisshaar B."/>
            <person name="Becker A."/>
            <person name="Niehaus K."/>
            <person name="Puehler A."/>
        </authorList>
    </citation>
    <scope>NUCLEOTIDE SEQUENCE [LARGE SCALE GENOMIC DNA]</scope>
    <source>
        <strain>B100</strain>
    </source>
</reference>
<accession>B0RPU7</accession>
<evidence type="ECO:0000255" key="1">
    <source>
        <dbReference type="HAMAP-Rule" id="MF_00028"/>
    </source>
</evidence>
<gene>
    <name evidence="1" type="primary">cobQ</name>
    <name type="ordered locus">xcc-b100_1134</name>
</gene>
<sequence>MSARVLMVQGCTSDAGKSTLVAALCRWLHRQGVAVAPFKPQNMALNSAVTVDGGEIGRAQAVQAQACGLPPHTDFNPVLLKPNSDTGAQVIVHGHPVATLDAVGYHAYKRTARTAVLASHARLVERFDVLLVEGAGSPAEINLREHDIANMGYAEAVDCAVILIADINRGGVFAHLVGTLALLSPSERARVAGFVINRFRGDLALLQPGLEWLERETGKPVLGVLPYLHGLQLDAEDALPRGPVHKPQARLRVVVPVLPRISNHTDLDALLAHPQVDVQLIGPGQSVPPCDLIVLPGSKSTRQDLAWLRAQGWEAAIARHLRYGGKLLGICGGLQMLGEQVHDPHGIEGAPGSSAGLGWLALQTALQPHKQLHRVGGRLLPSGAAVSGYEIHCGLSTGAALARPLLQLDDGRSDGAVSEDGQVMGTYLHGIFDHPAALAALLAWAGLADAAPLDLASLREATLERLADTVHAHLDIAALTRLTLGEPACAN</sequence>
<feature type="chain" id="PRO_1000090253" description="Cobyric acid synthase">
    <location>
        <begin position="1"/>
        <end position="491"/>
    </location>
</feature>
<feature type="domain" description="GATase cobBQ-type" evidence="1">
    <location>
        <begin position="250"/>
        <end position="437"/>
    </location>
</feature>
<feature type="active site" description="Nucleophile" evidence="1">
    <location>
        <position position="331"/>
    </location>
</feature>
<feature type="active site" evidence="1">
    <location>
        <position position="429"/>
    </location>
</feature>
<name>COBQ_XANCB</name>
<proteinExistence type="inferred from homology"/>
<keyword id="KW-0169">Cobalamin biosynthesis</keyword>
<keyword id="KW-0315">Glutamine amidotransferase</keyword>
<dbReference type="EMBL" id="AM920689">
    <property type="protein sequence ID" value="CAP50482.1"/>
    <property type="molecule type" value="Genomic_DNA"/>
</dbReference>
<dbReference type="SMR" id="B0RPU7"/>
<dbReference type="KEGG" id="xca:xcc-b100_1134"/>
<dbReference type="HOGENOM" id="CLU_019250_2_2_6"/>
<dbReference type="UniPathway" id="UPA00148"/>
<dbReference type="Proteomes" id="UP000001188">
    <property type="component" value="Chromosome"/>
</dbReference>
<dbReference type="GO" id="GO:0015420">
    <property type="term" value="F:ABC-type vitamin B12 transporter activity"/>
    <property type="evidence" value="ECO:0007669"/>
    <property type="project" value="UniProtKB-UniRule"/>
</dbReference>
<dbReference type="GO" id="GO:0003824">
    <property type="term" value="F:catalytic activity"/>
    <property type="evidence" value="ECO:0007669"/>
    <property type="project" value="InterPro"/>
</dbReference>
<dbReference type="GO" id="GO:0009236">
    <property type="term" value="P:cobalamin biosynthetic process"/>
    <property type="evidence" value="ECO:0007669"/>
    <property type="project" value="UniProtKB-UniRule"/>
</dbReference>
<dbReference type="CDD" id="cd05389">
    <property type="entry name" value="CobQ_N"/>
    <property type="match status" value="1"/>
</dbReference>
<dbReference type="CDD" id="cd01750">
    <property type="entry name" value="GATase1_CobQ"/>
    <property type="match status" value="1"/>
</dbReference>
<dbReference type="Gene3D" id="3.40.50.880">
    <property type="match status" value="1"/>
</dbReference>
<dbReference type="Gene3D" id="3.40.50.300">
    <property type="entry name" value="P-loop containing nucleotide triphosphate hydrolases"/>
    <property type="match status" value="1"/>
</dbReference>
<dbReference type="HAMAP" id="MF_00028">
    <property type="entry name" value="CobQ"/>
    <property type="match status" value="1"/>
</dbReference>
<dbReference type="InterPro" id="IPR029062">
    <property type="entry name" value="Class_I_gatase-like"/>
</dbReference>
<dbReference type="InterPro" id="IPR002586">
    <property type="entry name" value="CobQ/CobB/MinD/ParA_Nub-bd_dom"/>
</dbReference>
<dbReference type="InterPro" id="IPR033949">
    <property type="entry name" value="CobQ_GATase1"/>
</dbReference>
<dbReference type="InterPro" id="IPR047045">
    <property type="entry name" value="CobQ_N"/>
</dbReference>
<dbReference type="InterPro" id="IPR004459">
    <property type="entry name" value="CobQ_synth"/>
</dbReference>
<dbReference type="InterPro" id="IPR011698">
    <property type="entry name" value="GATase_3"/>
</dbReference>
<dbReference type="InterPro" id="IPR027417">
    <property type="entry name" value="P-loop_NTPase"/>
</dbReference>
<dbReference type="NCBIfam" id="TIGR00313">
    <property type="entry name" value="cobQ"/>
    <property type="match status" value="1"/>
</dbReference>
<dbReference type="NCBIfam" id="NF001989">
    <property type="entry name" value="PRK00784.1"/>
    <property type="match status" value="1"/>
</dbReference>
<dbReference type="PANTHER" id="PTHR21343:SF1">
    <property type="entry name" value="COBYRIC ACID SYNTHASE"/>
    <property type="match status" value="1"/>
</dbReference>
<dbReference type="PANTHER" id="PTHR21343">
    <property type="entry name" value="DETHIOBIOTIN SYNTHETASE"/>
    <property type="match status" value="1"/>
</dbReference>
<dbReference type="Pfam" id="PF01656">
    <property type="entry name" value="CbiA"/>
    <property type="match status" value="1"/>
</dbReference>
<dbReference type="Pfam" id="PF07685">
    <property type="entry name" value="GATase_3"/>
    <property type="match status" value="1"/>
</dbReference>
<dbReference type="SUPFAM" id="SSF52317">
    <property type="entry name" value="Class I glutamine amidotransferase-like"/>
    <property type="match status" value="1"/>
</dbReference>
<dbReference type="SUPFAM" id="SSF52540">
    <property type="entry name" value="P-loop containing nucleoside triphosphate hydrolases"/>
    <property type="match status" value="1"/>
</dbReference>
<dbReference type="PROSITE" id="PS51274">
    <property type="entry name" value="GATASE_COBBQ"/>
    <property type="match status" value="1"/>
</dbReference>
<comment type="function">
    <text evidence="1">Catalyzes amidations at positions B, D, E, and G on adenosylcobyrinic A,C-diamide. NH(2) groups are provided by glutamine, and one molecule of ATP is hydrogenolyzed for each amidation.</text>
</comment>
<comment type="pathway">
    <text evidence="1">Cofactor biosynthesis; adenosylcobalamin biosynthesis.</text>
</comment>
<comment type="similarity">
    <text evidence="1">Belongs to the CobB/CobQ family. CobQ subfamily.</text>
</comment>
<protein>
    <recommendedName>
        <fullName evidence="1">Cobyric acid synthase</fullName>
    </recommendedName>
</protein>